<reference key="1">
    <citation type="journal article" date="2009" name="PLoS Genet.">
        <title>Organised genome dynamics in the Escherichia coli species results in highly diverse adaptive paths.</title>
        <authorList>
            <person name="Touchon M."/>
            <person name="Hoede C."/>
            <person name="Tenaillon O."/>
            <person name="Barbe V."/>
            <person name="Baeriswyl S."/>
            <person name="Bidet P."/>
            <person name="Bingen E."/>
            <person name="Bonacorsi S."/>
            <person name="Bouchier C."/>
            <person name="Bouvet O."/>
            <person name="Calteau A."/>
            <person name="Chiapello H."/>
            <person name="Clermont O."/>
            <person name="Cruveiller S."/>
            <person name="Danchin A."/>
            <person name="Diard M."/>
            <person name="Dossat C."/>
            <person name="Karoui M.E."/>
            <person name="Frapy E."/>
            <person name="Garry L."/>
            <person name="Ghigo J.M."/>
            <person name="Gilles A.M."/>
            <person name="Johnson J."/>
            <person name="Le Bouguenec C."/>
            <person name="Lescat M."/>
            <person name="Mangenot S."/>
            <person name="Martinez-Jehanne V."/>
            <person name="Matic I."/>
            <person name="Nassif X."/>
            <person name="Oztas S."/>
            <person name="Petit M.A."/>
            <person name="Pichon C."/>
            <person name="Rouy Z."/>
            <person name="Ruf C.S."/>
            <person name="Schneider D."/>
            <person name="Tourret J."/>
            <person name="Vacherie B."/>
            <person name="Vallenet D."/>
            <person name="Medigue C."/>
            <person name="Rocha E.P.C."/>
            <person name="Denamur E."/>
        </authorList>
    </citation>
    <scope>NUCLEOTIDE SEQUENCE [LARGE SCALE GENOMIC DNA]</scope>
    <source>
        <strain>ED1a</strain>
    </source>
</reference>
<dbReference type="EMBL" id="CU928162">
    <property type="protein sequence ID" value="CAR06965.1"/>
    <property type="molecule type" value="Genomic_DNA"/>
</dbReference>
<dbReference type="SMR" id="B7MQP9"/>
<dbReference type="KEGG" id="ecq:ECED1_0760"/>
<dbReference type="HOGENOM" id="CLU_018816_6_3_6"/>
<dbReference type="Proteomes" id="UP000000748">
    <property type="component" value="Chromosome"/>
</dbReference>
<dbReference type="GO" id="GO:0042597">
    <property type="term" value="C:periplasmic space"/>
    <property type="evidence" value="ECO:0007669"/>
    <property type="project" value="UniProtKB-SubCell"/>
</dbReference>
<dbReference type="FunFam" id="1.10.287.470:FF:000004">
    <property type="entry name" value="UPF0194 membrane protein YbhG"/>
    <property type="match status" value="1"/>
</dbReference>
<dbReference type="FunFam" id="2.40.50.100:FF:000025">
    <property type="entry name" value="UPF0194 membrane protein YbhG"/>
    <property type="match status" value="1"/>
</dbReference>
<dbReference type="Gene3D" id="2.40.30.170">
    <property type="match status" value="1"/>
</dbReference>
<dbReference type="Gene3D" id="2.40.50.100">
    <property type="match status" value="2"/>
</dbReference>
<dbReference type="Gene3D" id="1.10.287.470">
    <property type="entry name" value="Helix hairpin bin"/>
    <property type="match status" value="1"/>
</dbReference>
<dbReference type="HAMAP" id="MF_01304">
    <property type="entry name" value="UPF0194"/>
    <property type="match status" value="1"/>
</dbReference>
<dbReference type="InterPro" id="IPR032317">
    <property type="entry name" value="CusB_D23"/>
</dbReference>
<dbReference type="InterPro" id="IPR022936">
    <property type="entry name" value="UPF0194_membrane_YbhG"/>
</dbReference>
<dbReference type="InterPro" id="IPR050465">
    <property type="entry name" value="UPF0194_transport"/>
</dbReference>
<dbReference type="NCBIfam" id="NF002939">
    <property type="entry name" value="PRK03598.1"/>
    <property type="match status" value="1"/>
</dbReference>
<dbReference type="PANTHER" id="PTHR32347">
    <property type="entry name" value="EFFLUX SYSTEM COMPONENT YKNX-RELATED"/>
    <property type="match status" value="1"/>
</dbReference>
<dbReference type="PANTHER" id="PTHR32347:SF29">
    <property type="entry name" value="UPF0194 MEMBRANE PROTEIN YBHG"/>
    <property type="match status" value="1"/>
</dbReference>
<dbReference type="Pfam" id="PF16576">
    <property type="entry name" value="HlyD_D23"/>
    <property type="match status" value="1"/>
</dbReference>
<dbReference type="SUPFAM" id="SSF111369">
    <property type="entry name" value="HlyD-like secretion proteins"/>
    <property type="match status" value="2"/>
</dbReference>
<dbReference type="SUPFAM" id="SSF56954">
    <property type="entry name" value="Outer membrane efflux proteins (OEP)"/>
    <property type="match status" value="1"/>
</dbReference>
<name>YBHG_ECO81</name>
<protein>
    <recommendedName>
        <fullName evidence="1">UPF0194 membrane protein YbhG</fullName>
    </recommendedName>
</protein>
<feature type="signal peptide" evidence="1">
    <location>
        <begin position="1"/>
        <end position="16"/>
    </location>
</feature>
<feature type="chain" id="PRO_1000165368" description="UPF0194 membrane protein YbhG">
    <location>
        <begin position="17"/>
        <end position="332"/>
    </location>
</feature>
<feature type="coiled-coil region" evidence="1">
    <location>
        <begin position="108"/>
        <end position="209"/>
    </location>
</feature>
<accession>B7MQP9</accession>
<gene>
    <name evidence="1" type="primary">ybhG</name>
    <name type="ordered locus">ECED1_0760</name>
</gene>
<evidence type="ECO:0000255" key="1">
    <source>
        <dbReference type="HAMAP-Rule" id="MF_01304"/>
    </source>
</evidence>
<proteinExistence type="inferred from homology"/>
<organism>
    <name type="scientific">Escherichia coli O81 (strain ED1a)</name>
    <dbReference type="NCBI Taxonomy" id="585397"/>
    <lineage>
        <taxon>Bacteria</taxon>
        <taxon>Pseudomonadati</taxon>
        <taxon>Pseudomonadota</taxon>
        <taxon>Gammaproteobacteria</taxon>
        <taxon>Enterobacterales</taxon>
        <taxon>Enterobacteriaceae</taxon>
        <taxon>Escherichia</taxon>
    </lineage>
</organism>
<keyword id="KW-0175">Coiled coil</keyword>
<keyword id="KW-0574">Periplasm</keyword>
<keyword id="KW-0732">Signal</keyword>
<sequence>MMKKPVVIGLAVVVLAAVVAGGYWWYQSRQDNGLTLYGNVDIRTVNLSFRVGGRVESLAVDEGDAIKAGQVLGELDHKPYEIALMQAKAGVSVAQAQYDLMLAGYRDEEIAQAAAAVKQAQAAYDYAQNFYNRQQGLWKSRTISANDLENARSSRDQAQATLKSAQDKLRQYRSGNREQDIAQAKASLEQAQAQLAQAELNLQDSTLIAPSDGTLLTRAVEPGTVLNEGGTVFTVSLTRPVWVRAYVDERNLDQAQPGRKVLLYTDGRPNKPYHGQIGFVSPTAEFTPKTVETPDLRTDLVYRLRIVVTDADDALRQGMPVTVQFGDEAGHE</sequence>
<comment type="subcellular location">
    <subcellularLocation>
        <location evidence="1">Periplasm</location>
    </subcellularLocation>
</comment>
<comment type="similarity">
    <text evidence="1">Belongs to the UPF0194 family.</text>
</comment>